<accession>Q5UPJ1</accession>
<dbReference type="EMBL" id="AY653733">
    <property type="protein sequence ID" value="AAV50393.1"/>
    <property type="molecule type" value="Genomic_DNA"/>
</dbReference>
<dbReference type="KEGG" id="vg:9924717"/>
<dbReference type="OrthoDB" id="10544at10239"/>
<dbReference type="Proteomes" id="UP000001134">
    <property type="component" value="Genome"/>
</dbReference>
<protein>
    <recommendedName>
        <fullName>Uncharacterized protein R118</fullName>
    </recommendedName>
</protein>
<keyword id="KW-1185">Reference proteome</keyword>
<keyword id="KW-0732">Signal</keyword>
<feature type="signal peptide" evidence="1">
    <location>
        <begin position="1"/>
        <end position="21"/>
    </location>
</feature>
<feature type="chain" id="PRO_0000253260" description="Uncharacterized protein R118">
    <location>
        <begin position="22"/>
        <end position="356"/>
    </location>
</feature>
<feature type="region of interest" description="Disordered" evidence="2">
    <location>
        <begin position="293"/>
        <end position="317"/>
    </location>
</feature>
<sequence length="356" mass="40596">MHWSRFVGIFLVFSVFSLVNCQCDSGELFVVRFPTNPIMNNTRMCMTYDNDININFPTVIKTPIWLKNRLYPIIGRGPEYLKYFSDHHGKEIFVSYTDDLRGPWVVHAPGTLKLSQVLDAFNASSVNDTKSEIASADIYLDHANKTVRMYFHRRVPNDNYAIVSSIAYSKDGINFDNIDTRNIGSAYIRHFVHDGYIYLTDRVGKLWRSRDGVNNLEPGTTTIGDAFTNNSMVNGDGYTGLLRHLGLIKSGDYLYIYGTRIGDSPERILRTKMKLTNDWTTWNAEYPAKEGFRPETDYEGANLPNIPSKKGSANQPVNQLRDPFPFYDMGRCYMFYTVAGESGIAGARLPKCWENK</sequence>
<evidence type="ECO:0000255" key="1"/>
<evidence type="ECO:0000256" key="2">
    <source>
        <dbReference type="SAM" id="MobiDB-lite"/>
    </source>
</evidence>
<reference key="1">
    <citation type="journal article" date="2004" name="Science">
        <title>The 1.2-megabase genome sequence of Mimivirus.</title>
        <authorList>
            <person name="Raoult D."/>
            <person name="Audic S."/>
            <person name="Robert C."/>
            <person name="Abergel C."/>
            <person name="Renesto P."/>
            <person name="Ogata H."/>
            <person name="La Scola B."/>
            <person name="Susan M."/>
            <person name="Claverie J.-M."/>
        </authorList>
    </citation>
    <scope>NUCLEOTIDE SEQUENCE [LARGE SCALE GENOMIC DNA]</scope>
    <source>
        <strain>Rowbotham-Bradford</strain>
    </source>
</reference>
<gene>
    <name type="ordered locus">MIMI_R118</name>
</gene>
<organism>
    <name type="scientific">Acanthamoeba polyphaga mimivirus</name>
    <name type="common">APMV</name>
    <dbReference type="NCBI Taxonomy" id="212035"/>
    <lineage>
        <taxon>Viruses</taxon>
        <taxon>Varidnaviria</taxon>
        <taxon>Bamfordvirae</taxon>
        <taxon>Nucleocytoviricota</taxon>
        <taxon>Megaviricetes</taxon>
        <taxon>Imitervirales</taxon>
        <taxon>Mimiviridae</taxon>
        <taxon>Megamimivirinae</taxon>
        <taxon>Mimivirus</taxon>
        <taxon>Mimivirus bradfordmassiliense</taxon>
    </lineage>
</organism>
<name>YR118_MIMIV</name>
<organismHost>
    <name type="scientific">Acanthamoeba polyphaga</name>
    <name type="common">Amoeba</name>
    <dbReference type="NCBI Taxonomy" id="5757"/>
</organismHost>
<proteinExistence type="inferred from homology"/>